<feature type="chain" id="PRO_0000071329" description="Uncharacterized protein R703">
    <location>
        <begin position="1"/>
        <end position="135"/>
    </location>
</feature>
<name>YR703_MIMIV</name>
<keyword id="KW-1185">Reference proteome</keyword>
<organismHost>
    <name type="scientific">Acanthamoeba polyphaga</name>
    <name type="common">Amoeba</name>
    <dbReference type="NCBI Taxonomy" id="5757"/>
</organismHost>
<gene>
    <name type="ordered locus">MIMI_R703</name>
</gene>
<proteinExistence type="predicted"/>
<organism>
    <name type="scientific">Acanthamoeba polyphaga mimivirus</name>
    <name type="common">APMV</name>
    <dbReference type="NCBI Taxonomy" id="212035"/>
    <lineage>
        <taxon>Viruses</taxon>
        <taxon>Varidnaviria</taxon>
        <taxon>Bamfordvirae</taxon>
        <taxon>Nucleocytoviricota</taxon>
        <taxon>Megaviricetes</taxon>
        <taxon>Imitervirales</taxon>
        <taxon>Mimiviridae</taxon>
        <taxon>Megamimivirinae</taxon>
        <taxon>Mimivirus</taxon>
        <taxon>Mimivirus bradfordmassiliense</taxon>
    </lineage>
</organism>
<reference key="1">
    <citation type="journal article" date="2004" name="Science">
        <title>The 1.2-megabase genome sequence of Mimivirus.</title>
        <authorList>
            <person name="Raoult D."/>
            <person name="Audic S."/>
            <person name="Robert C."/>
            <person name="Abergel C."/>
            <person name="Renesto P."/>
            <person name="Ogata H."/>
            <person name="La Scola B."/>
            <person name="Susan M."/>
            <person name="Claverie J.-M."/>
        </authorList>
    </citation>
    <scope>NUCLEOTIDE SEQUENCE [LARGE SCALE GENOMIC DNA]</scope>
    <source>
        <strain>Rowbotham-Bradford</strain>
    </source>
</reference>
<accession>Q5UNW5</accession>
<protein>
    <recommendedName>
        <fullName>Uncharacterized protein R703</fullName>
    </recommendedName>
</protein>
<dbReference type="EMBL" id="AY653733">
    <property type="protein sequence ID" value="AAV50963.1"/>
    <property type="molecule type" value="Genomic_DNA"/>
</dbReference>
<dbReference type="KEGG" id="vg:9925356"/>
<dbReference type="OrthoDB" id="36023at10239"/>
<dbReference type="Proteomes" id="UP000001134">
    <property type="component" value="Genome"/>
</dbReference>
<sequence>MIITYKLLRNYLLDQDKYHITVKNNYLVISVPDIDYHVTVFQDQWDDYFKFTKKPYHLFHISSNSEINKCSSYFWVGLYENRIQNIPRKYFKYNQDEYNFYSSTRSPCVLKELTLLLKHFQYILNKIKKMCSNNH</sequence>